<feature type="signal peptide" evidence="2">
    <location>
        <begin position="1"/>
        <end position="40"/>
    </location>
</feature>
<feature type="chain" id="PRO_0000285195" description="Iron-regulated surface determinant protein H">
    <location>
        <begin position="41"/>
        <end position="864"/>
    </location>
</feature>
<feature type="propeptide" id="PRO_0000285196" description="Removed by sortase" evidence="4">
    <location>
        <begin position="865"/>
        <end position="895"/>
    </location>
</feature>
<feature type="domain" description="NEAT 1" evidence="3">
    <location>
        <begin position="105"/>
        <end position="232"/>
    </location>
</feature>
<feature type="domain" description="NEAT 2" evidence="3">
    <location>
        <begin position="345"/>
        <end position="471"/>
    </location>
</feature>
<feature type="domain" description="NEAT 3" evidence="3">
    <location>
        <begin position="543"/>
        <end position="660"/>
    </location>
</feature>
<feature type="region of interest" description="Disordered" evidence="5">
    <location>
        <begin position="42"/>
        <end position="85"/>
    </location>
</feature>
<feature type="region of interest" description="Disordered" evidence="5">
    <location>
        <begin position="241"/>
        <end position="324"/>
    </location>
</feature>
<feature type="region of interest" description="Disordered" evidence="5">
    <location>
        <begin position="657"/>
        <end position="720"/>
    </location>
</feature>
<feature type="region of interest" description="Disordered" evidence="5">
    <location>
        <begin position="751"/>
        <end position="782"/>
    </location>
</feature>
<feature type="region of interest" description="Disordered" evidence="5">
    <location>
        <begin position="841"/>
        <end position="868"/>
    </location>
</feature>
<feature type="short sequence motif" description="LPXTG sorting signal" evidence="4">
    <location>
        <begin position="861"/>
        <end position="865"/>
    </location>
</feature>
<feature type="compositionally biased region" description="Low complexity" evidence="5">
    <location>
        <begin position="53"/>
        <end position="62"/>
    </location>
</feature>
<feature type="compositionally biased region" description="Polar residues" evidence="5">
    <location>
        <begin position="63"/>
        <end position="81"/>
    </location>
</feature>
<feature type="compositionally biased region" description="Low complexity" evidence="5">
    <location>
        <begin position="243"/>
        <end position="276"/>
    </location>
</feature>
<feature type="compositionally biased region" description="Polar residues" evidence="5">
    <location>
        <begin position="277"/>
        <end position="323"/>
    </location>
</feature>
<feature type="compositionally biased region" description="Polar residues" evidence="5">
    <location>
        <begin position="663"/>
        <end position="677"/>
    </location>
</feature>
<feature type="compositionally biased region" description="Polar residues" evidence="5">
    <location>
        <begin position="687"/>
        <end position="697"/>
    </location>
</feature>
<feature type="compositionally biased region" description="Basic and acidic residues" evidence="5">
    <location>
        <begin position="698"/>
        <end position="720"/>
    </location>
</feature>
<feature type="compositionally biased region" description="Basic and acidic residues" evidence="5">
    <location>
        <begin position="751"/>
        <end position="765"/>
    </location>
</feature>
<feature type="compositionally biased region" description="Basic and acidic residues" evidence="5">
    <location>
        <begin position="841"/>
        <end position="854"/>
    </location>
</feature>
<feature type="compositionally biased region" description="Polar residues" evidence="5">
    <location>
        <begin position="855"/>
        <end position="868"/>
    </location>
</feature>
<feature type="modified residue" description="Pentaglycyl murein peptidoglycan amidated threonine" evidence="4">
    <location>
        <position position="864"/>
    </location>
</feature>
<feature type="helix" evidence="7">
    <location>
        <begin position="330"/>
        <end position="333"/>
    </location>
</feature>
<feature type="helix" evidence="7">
    <location>
        <begin position="337"/>
        <end position="339"/>
    </location>
</feature>
<feature type="strand" evidence="7">
    <location>
        <begin position="350"/>
        <end position="352"/>
    </location>
</feature>
<feature type="strand" evidence="7">
    <location>
        <begin position="354"/>
        <end position="357"/>
    </location>
</feature>
<feature type="strand" evidence="7">
    <location>
        <begin position="361"/>
        <end position="363"/>
    </location>
</feature>
<feature type="helix" evidence="7">
    <location>
        <begin position="365"/>
        <end position="369"/>
    </location>
</feature>
<feature type="strand" evidence="7">
    <location>
        <begin position="373"/>
        <end position="377"/>
    </location>
</feature>
<feature type="strand" evidence="7">
    <location>
        <begin position="385"/>
        <end position="391"/>
    </location>
</feature>
<feature type="helix" evidence="7">
    <location>
        <begin position="393"/>
        <end position="395"/>
    </location>
</feature>
<feature type="strand" evidence="7">
    <location>
        <begin position="396"/>
        <end position="403"/>
    </location>
</feature>
<feature type="strand" evidence="7">
    <location>
        <begin position="411"/>
        <end position="416"/>
    </location>
</feature>
<feature type="turn" evidence="7">
    <location>
        <begin position="417"/>
        <end position="420"/>
    </location>
</feature>
<feature type="strand" evidence="7">
    <location>
        <begin position="421"/>
        <end position="427"/>
    </location>
</feature>
<feature type="strand" evidence="7">
    <location>
        <begin position="434"/>
        <end position="443"/>
    </location>
</feature>
<feature type="turn" evidence="7">
    <location>
        <begin position="444"/>
        <end position="446"/>
    </location>
</feature>
<feature type="strand" evidence="7">
    <location>
        <begin position="447"/>
        <end position="460"/>
    </location>
</feature>
<feature type="helix" evidence="7">
    <location>
        <begin position="475"/>
        <end position="486"/>
    </location>
</feature>
<feature type="helix" evidence="7">
    <location>
        <begin position="490"/>
        <end position="503"/>
    </location>
</feature>
<feature type="helix" evidence="7">
    <location>
        <begin position="506"/>
        <end position="533"/>
    </location>
</feature>
<feature type="strand" evidence="7">
    <location>
        <begin position="545"/>
        <end position="550"/>
    </location>
</feature>
<feature type="strand" evidence="7">
    <location>
        <begin position="552"/>
        <end position="556"/>
    </location>
</feature>
<feature type="strand" evidence="7">
    <location>
        <begin position="559"/>
        <end position="562"/>
    </location>
</feature>
<feature type="helix" evidence="7">
    <location>
        <begin position="564"/>
        <end position="566"/>
    </location>
</feature>
<feature type="strand" evidence="7">
    <location>
        <begin position="571"/>
        <end position="578"/>
    </location>
</feature>
<feature type="strand" evidence="7">
    <location>
        <begin position="581"/>
        <end position="590"/>
    </location>
</feature>
<feature type="helix" evidence="7">
    <location>
        <begin position="591"/>
        <end position="593"/>
    </location>
</feature>
<feature type="strand" evidence="7">
    <location>
        <begin position="594"/>
        <end position="599"/>
    </location>
</feature>
<feature type="strand" evidence="7">
    <location>
        <begin position="605"/>
        <end position="610"/>
    </location>
</feature>
<feature type="helix" evidence="7">
    <location>
        <begin position="611"/>
        <end position="613"/>
    </location>
</feature>
<feature type="strand" evidence="7">
    <location>
        <begin position="615"/>
        <end position="621"/>
    </location>
</feature>
<feature type="strand" evidence="7">
    <location>
        <begin position="628"/>
        <end position="636"/>
    </location>
</feature>
<feature type="strand" evidence="7">
    <location>
        <begin position="638"/>
        <end position="641"/>
    </location>
</feature>
<feature type="strand" evidence="7">
    <location>
        <begin position="643"/>
        <end position="652"/>
    </location>
</feature>
<sequence length="895" mass="100935">MNKHHPKLRSFYSIRKSTLGVASVIVSTLFLITSQHQAQAAENTNTSDKISENQNNNATTTQPPKDTNQTQPATQPANTAKNYPAADESLKDAIKDPALENKEHDIGPREQVNFQLLDKNNETQYYHFFSIKDPADVYYTKKKAEVELDINTASTWKKFEVYENNQKLPVRLVSYSPVPEDHAYIRFPVSDGTQELKIVSSTQIDDGEETNYDYTKLVFAKPIYNDPSLVKSDTNDAVVTNDQSSSVASNQTNTNTSNQNTSTINNANNQPQATTNMSQPAQPKSSTNADQASSQPAHETNSNGNTNDKTNESSNQSDVNQQYPPADESLQDAIKNPAIIDKEHTADNWRPIDFQMKNDKGERQFYHYASTVEPATVIFTKTGPIIELGLKTASTWKKFEVYEGDKKLPVELVSYDSDKDYAYIRFPVSNGTREVKIVSSIEYGENIHEDYDYTLMVFAQPITNNPDDYVDEETYNLQKLLAPYHKAKTLERQVYELEKLQEKLPEKYKAEYKKKLDQTRVELADQVKSAVTEFENVTPTNDQLTDLQEAHFVVFESEENSESVMDGFVEHPFYTATLNGQKYVVMKTKDDSYWKDLIVEGKRVTTVSKDPKNNSRTLIFPYIPDKAVYNAIVKVVVANIGYEGQYHVRIINQDINTKDDDTSQNNTSEPLNVQTGQEGKVADTDVAENSSTATNPKDASDKADVIEPESDVVKDADNNIDKDVQHDVDHLSDMSDNNHFDKYDLKEMDTQIAKDTDRNVDKDADNSVGMSSNVDTDKDSNKNKDKVIQLNHIADKNNHTGKAAKLDVVKQNYNNTDKVTDKKTTEHLPSDIHKTVDKTVKTKEKAGTPSKENKLSQSKMLPKTGETTSSQSWWGLYALLGMLALFIPKFRKESK</sequence>
<protein>
    <recommendedName>
        <fullName>Iron-regulated surface determinant protein H</fullName>
    </recommendedName>
    <alternativeName>
        <fullName>Haptoglobin receptor A</fullName>
    </alternativeName>
    <alternativeName>
        <fullName>Staphylococcus aureus surface protein I</fullName>
    </alternativeName>
</protein>
<accession>Q2FG07</accession>
<proteinExistence type="evidence at protein level"/>
<name>ISDH_STAA3</name>
<organism>
    <name type="scientific">Staphylococcus aureus (strain USA300)</name>
    <dbReference type="NCBI Taxonomy" id="367830"/>
    <lineage>
        <taxon>Bacteria</taxon>
        <taxon>Bacillati</taxon>
        <taxon>Bacillota</taxon>
        <taxon>Bacilli</taxon>
        <taxon>Bacillales</taxon>
        <taxon>Staphylococcaceae</taxon>
        <taxon>Staphylococcus</taxon>
    </lineage>
</organism>
<evidence type="ECO:0000250" key="1"/>
<evidence type="ECO:0000255" key="2"/>
<evidence type="ECO:0000255" key="3">
    <source>
        <dbReference type="PROSITE-ProRule" id="PRU00337"/>
    </source>
</evidence>
<evidence type="ECO:0000255" key="4">
    <source>
        <dbReference type="PROSITE-ProRule" id="PRU00477"/>
    </source>
</evidence>
<evidence type="ECO:0000256" key="5">
    <source>
        <dbReference type="SAM" id="MobiDB-lite"/>
    </source>
</evidence>
<evidence type="ECO:0000305" key="6"/>
<evidence type="ECO:0007829" key="7">
    <source>
        <dbReference type="PDB" id="4XS0"/>
    </source>
</evidence>
<dbReference type="EMBL" id="CP000255">
    <property type="protein sequence ID" value="ABD20516.1"/>
    <property type="molecule type" value="Genomic_DNA"/>
</dbReference>
<dbReference type="RefSeq" id="WP_001032773.1">
    <property type="nucleotide sequence ID" value="NZ_CP027476.1"/>
</dbReference>
<dbReference type="PDB" id="4IJ2">
    <property type="method" value="X-ray"/>
    <property type="resolution" value="4.24 A"/>
    <property type="chains" value="E/F/G/H=326-660"/>
</dbReference>
<dbReference type="PDB" id="4XS0">
    <property type="method" value="X-ray"/>
    <property type="resolution" value="2.55 A"/>
    <property type="chains" value="C=326-660"/>
</dbReference>
<dbReference type="PDBsum" id="4IJ2"/>
<dbReference type="PDBsum" id="4XS0"/>
<dbReference type="BMRB" id="Q2FG07"/>
<dbReference type="SMR" id="Q2FG07"/>
<dbReference type="KEGG" id="saa:SAUSA300_1677"/>
<dbReference type="HOGENOM" id="CLU_016167_1_0_9"/>
<dbReference type="OMA" id="RQTDRFR"/>
<dbReference type="EvolutionaryTrace" id="Q2FG07"/>
<dbReference type="Proteomes" id="UP000001939">
    <property type="component" value="Chromosome"/>
</dbReference>
<dbReference type="GO" id="GO:0005576">
    <property type="term" value="C:extracellular region"/>
    <property type="evidence" value="ECO:0007669"/>
    <property type="project" value="UniProtKB-KW"/>
</dbReference>
<dbReference type="GO" id="GO:0020037">
    <property type="term" value="F:heme binding"/>
    <property type="evidence" value="ECO:0007669"/>
    <property type="project" value="InterPro"/>
</dbReference>
<dbReference type="CDD" id="cd06920">
    <property type="entry name" value="NEAT"/>
    <property type="match status" value="1"/>
</dbReference>
<dbReference type="Gene3D" id="1.20.58.1270">
    <property type="match status" value="1"/>
</dbReference>
<dbReference type="Gene3D" id="2.60.40.1850">
    <property type="match status" value="3"/>
</dbReference>
<dbReference type="InterPro" id="IPR048652">
    <property type="entry name" value="Isd_H_B_linker"/>
</dbReference>
<dbReference type="InterPro" id="IPR050436">
    <property type="entry name" value="IsdA"/>
</dbReference>
<dbReference type="InterPro" id="IPR019930">
    <property type="entry name" value="IsdH"/>
</dbReference>
<dbReference type="InterPro" id="IPR019931">
    <property type="entry name" value="LPXTG_anchor"/>
</dbReference>
<dbReference type="InterPro" id="IPR006635">
    <property type="entry name" value="NEAT_dom"/>
</dbReference>
<dbReference type="InterPro" id="IPR037250">
    <property type="entry name" value="NEAT_dom_sf"/>
</dbReference>
<dbReference type="InterPro" id="IPR005877">
    <property type="entry name" value="YSIRK_signal_dom"/>
</dbReference>
<dbReference type="NCBIfam" id="TIGR03658">
    <property type="entry name" value="IsdH_HarA"/>
    <property type="match status" value="1"/>
</dbReference>
<dbReference type="NCBIfam" id="TIGR01167">
    <property type="entry name" value="LPXTG_anchor"/>
    <property type="match status" value="1"/>
</dbReference>
<dbReference type="NCBIfam" id="TIGR01168">
    <property type="entry name" value="YSIRK_signal"/>
    <property type="match status" value="1"/>
</dbReference>
<dbReference type="PANTHER" id="PTHR37824">
    <property type="entry name" value="IRON-REGULATED SURFACE DETERMINANT PROTEIN C"/>
    <property type="match status" value="1"/>
</dbReference>
<dbReference type="PANTHER" id="PTHR37824:SF1">
    <property type="entry name" value="IRON-REGULATED SURFACE DETERMINANT PROTEIN C"/>
    <property type="match status" value="1"/>
</dbReference>
<dbReference type="Pfam" id="PF20861">
    <property type="entry name" value="Isd_H_B_linker"/>
    <property type="match status" value="1"/>
</dbReference>
<dbReference type="Pfam" id="PF05031">
    <property type="entry name" value="NEAT"/>
    <property type="match status" value="3"/>
</dbReference>
<dbReference type="Pfam" id="PF04650">
    <property type="entry name" value="YSIRK_signal"/>
    <property type="match status" value="1"/>
</dbReference>
<dbReference type="SMART" id="SM00725">
    <property type="entry name" value="NEAT"/>
    <property type="match status" value="3"/>
</dbReference>
<dbReference type="SUPFAM" id="SSF158911">
    <property type="entry name" value="NEAT domain-like"/>
    <property type="match status" value="3"/>
</dbReference>
<dbReference type="PROSITE" id="PS50847">
    <property type="entry name" value="GRAM_POS_ANCHORING"/>
    <property type="match status" value="1"/>
</dbReference>
<dbReference type="PROSITE" id="PS50978">
    <property type="entry name" value="NEAT"/>
    <property type="match status" value="3"/>
</dbReference>
<keyword id="KW-0002">3D-structure</keyword>
<keyword id="KW-0134">Cell wall</keyword>
<keyword id="KW-0572">Peptidoglycan-anchor</keyword>
<keyword id="KW-0677">Repeat</keyword>
<keyword id="KW-0964">Secreted</keyword>
<keyword id="KW-0732">Signal</keyword>
<gene>
    <name type="primary">isdH</name>
    <name type="synonym">harA</name>
    <name type="synonym">sasI</name>
    <name type="ordered locus">SAUSA300_1677</name>
</gene>
<reference key="1">
    <citation type="journal article" date="2006" name="Lancet">
        <title>Complete genome sequence of USA300, an epidemic clone of community-acquired meticillin-resistant Staphylococcus aureus.</title>
        <authorList>
            <person name="Diep B.A."/>
            <person name="Gill S.R."/>
            <person name="Chang R.F."/>
            <person name="Phan T.H."/>
            <person name="Chen J.H."/>
            <person name="Davidson M.G."/>
            <person name="Lin F."/>
            <person name="Lin J."/>
            <person name="Carleton H.A."/>
            <person name="Mongodin E.F."/>
            <person name="Sensabaugh G.F."/>
            <person name="Perdreau-Remington F."/>
        </authorList>
    </citation>
    <scope>NUCLEOTIDE SEQUENCE [LARGE SCALE GENOMIC DNA]</scope>
    <source>
        <strain>USA300</strain>
    </source>
</reference>
<comment type="function">
    <text evidence="1">Binds human plasma haptoglobin-hemoglobin complexes, haptoglobin and hemoglobin. Binds haptoglobin-hemoglobin complexes with significantly higher affinity than haptoglobin alone (By similarity).</text>
</comment>
<comment type="subcellular location">
    <subcellularLocation>
        <location evidence="6">Secreted</location>
        <location evidence="6">Cell wall</location>
        <topology evidence="6">Peptidoglycan-anchor</topology>
    </subcellularLocation>
</comment>
<comment type="domain">
    <text evidence="1">The NEAT 1 domain binds with higher affinity than the NEAT 2 domain haptoglobin-hemoglobin complexes, haptoglobin and hemoglobin.</text>
</comment>
<comment type="similarity">
    <text evidence="6">Belongs to the IsdH family.</text>
</comment>